<organism>
    <name type="scientific">Salmonella dublin (strain CT_02021853)</name>
    <dbReference type="NCBI Taxonomy" id="439851"/>
    <lineage>
        <taxon>Bacteria</taxon>
        <taxon>Pseudomonadati</taxon>
        <taxon>Pseudomonadota</taxon>
        <taxon>Gammaproteobacteria</taxon>
        <taxon>Enterobacterales</taxon>
        <taxon>Enterobacteriaceae</taxon>
        <taxon>Salmonella</taxon>
    </lineage>
</organism>
<accession>B5FM40</accession>
<evidence type="ECO:0000255" key="1">
    <source>
        <dbReference type="HAMAP-Rule" id="MF_00079"/>
    </source>
</evidence>
<feature type="chain" id="PRO_1000092745" description="ATP phosphoribosyltransferase">
    <location>
        <begin position="1"/>
        <end position="299"/>
    </location>
</feature>
<protein>
    <recommendedName>
        <fullName evidence="1">ATP phosphoribosyltransferase</fullName>
        <shortName evidence="1">ATP-PRT</shortName>
        <shortName evidence="1">ATP-PRTase</shortName>
        <ecNumber evidence="1">2.4.2.17</ecNumber>
    </recommendedName>
</protein>
<reference key="1">
    <citation type="journal article" date="2011" name="J. Bacteriol.">
        <title>Comparative genomics of 28 Salmonella enterica isolates: evidence for CRISPR-mediated adaptive sublineage evolution.</title>
        <authorList>
            <person name="Fricke W.F."/>
            <person name="Mammel M.K."/>
            <person name="McDermott P.F."/>
            <person name="Tartera C."/>
            <person name="White D.G."/>
            <person name="Leclerc J.E."/>
            <person name="Ravel J."/>
            <person name="Cebula T.A."/>
        </authorList>
    </citation>
    <scope>NUCLEOTIDE SEQUENCE [LARGE SCALE GENOMIC DNA]</scope>
    <source>
        <strain>CT_02021853</strain>
    </source>
</reference>
<comment type="function">
    <text evidence="1">Catalyzes the condensation of ATP and 5-phosphoribose 1-diphosphate to form N'-(5'-phosphoribosyl)-ATP (PR-ATP). Has a crucial role in the pathway because the rate of histidine biosynthesis seems to be controlled primarily by regulation of HisG enzymatic activity.</text>
</comment>
<comment type="catalytic activity">
    <reaction evidence="1">
        <text>1-(5-phospho-beta-D-ribosyl)-ATP + diphosphate = 5-phospho-alpha-D-ribose 1-diphosphate + ATP</text>
        <dbReference type="Rhea" id="RHEA:18473"/>
        <dbReference type="ChEBI" id="CHEBI:30616"/>
        <dbReference type="ChEBI" id="CHEBI:33019"/>
        <dbReference type="ChEBI" id="CHEBI:58017"/>
        <dbReference type="ChEBI" id="CHEBI:73183"/>
        <dbReference type="EC" id="2.4.2.17"/>
    </reaction>
</comment>
<comment type="cofactor">
    <cofactor evidence="1">
        <name>Mg(2+)</name>
        <dbReference type="ChEBI" id="CHEBI:18420"/>
    </cofactor>
</comment>
<comment type="activity regulation">
    <text evidence="1">Feedback inhibited by histidine.</text>
</comment>
<comment type="pathway">
    <text evidence="1">Amino-acid biosynthesis; L-histidine biosynthesis; L-histidine from 5-phospho-alpha-D-ribose 1-diphosphate: step 1/9.</text>
</comment>
<comment type="subunit">
    <text evidence="1">Equilibrium between an active dimeric form, an inactive hexameric form and higher aggregates. Interconversion between the various forms is largely reversible and is influenced by the natural substrates and inhibitors of the enzyme.</text>
</comment>
<comment type="subcellular location">
    <subcellularLocation>
        <location evidence="1">Cytoplasm</location>
    </subcellularLocation>
</comment>
<comment type="similarity">
    <text evidence="1">Belongs to the ATP phosphoribosyltransferase family. Long subfamily.</text>
</comment>
<dbReference type="EC" id="2.4.2.17" evidence="1"/>
<dbReference type="EMBL" id="CP001144">
    <property type="protein sequence ID" value="ACH73974.1"/>
    <property type="molecule type" value="Genomic_DNA"/>
</dbReference>
<dbReference type="RefSeq" id="WP_000886604.1">
    <property type="nucleotide sequence ID" value="NC_011205.1"/>
</dbReference>
<dbReference type="SMR" id="B5FM40"/>
<dbReference type="KEGG" id="sed:SeD_A2409"/>
<dbReference type="HOGENOM" id="CLU_038115_1_0_6"/>
<dbReference type="UniPathway" id="UPA00031">
    <property type="reaction ID" value="UER00006"/>
</dbReference>
<dbReference type="Proteomes" id="UP000008322">
    <property type="component" value="Chromosome"/>
</dbReference>
<dbReference type="GO" id="GO:0005737">
    <property type="term" value="C:cytoplasm"/>
    <property type="evidence" value="ECO:0007669"/>
    <property type="project" value="UniProtKB-SubCell"/>
</dbReference>
<dbReference type="GO" id="GO:0005524">
    <property type="term" value="F:ATP binding"/>
    <property type="evidence" value="ECO:0007669"/>
    <property type="project" value="UniProtKB-KW"/>
</dbReference>
<dbReference type="GO" id="GO:0003879">
    <property type="term" value="F:ATP phosphoribosyltransferase activity"/>
    <property type="evidence" value="ECO:0007669"/>
    <property type="project" value="UniProtKB-UniRule"/>
</dbReference>
<dbReference type="GO" id="GO:0000287">
    <property type="term" value="F:magnesium ion binding"/>
    <property type="evidence" value="ECO:0007669"/>
    <property type="project" value="UniProtKB-UniRule"/>
</dbReference>
<dbReference type="GO" id="GO:0000105">
    <property type="term" value="P:L-histidine biosynthetic process"/>
    <property type="evidence" value="ECO:0007669"/>
    <property type="project" value="UniProtKB-UniRule"/>
</dbReference>
<dbReference type="CDD" id="cd13592">
    <property type="entry name" value="PBP2_HisGL2"/>
    <property type="match status" value="1"/>
</dbReference>
<dbReference type="FunFam" id="3.30.70.120:FF:000002">
    <property type="entry name" value="ATP phosphoribosyltransferase"/>
    <property type="match status" value="1"/>
</dbReference>
<dbReference type="FunFam" id="3.40.190.10:FF:000008">
    <property type="entry name" value="ATP phosphoribosyltransferase"/>
    <property type="match status" value="1"/>
</dbReference>
<dbReference type="Gene3D" id="3.30.70.120">
    <property type="match status" value="1"/>
</dbReference>
<dbReference type="Gene3D" id="3.40.190.10">
    <property type="entry name" value="Periplasmic binding protein-like II"/>
    <property type="match status" value="2"/>
</dbReference>
<dbReference type="HAMAP" id="MF_00079">
    <property type="entry name" value="HisG_Long"/>
    <property type="match status" value="1"/>
</dbReference>
<dbReference type="InterPro" id="IPR020621">
    <property type="entry name" value="ATP-PRT_HisG_long"/>
</dbReference>
<dbReference type="InterPro" id="IPR013820">
    <property type="entry name" value="ATP_PRibTrfase_cat"/>
</dbReference>
<dbReference type="InterPro" id="IPR018198">
    <property type="entry name" value="ATP_PRibTrfase_CS"/>
</dbReference>
<dbReference type="InterPro" id="IPR001348">
    <property type="entry name" value="ATP_PRibTrfase_HisG"/>
</dbReference>
<dbReference type="InterPro" id="IPR013115">
    <property type="entry name" value="HisG_C"/>
</dbReference>
<dbReference type="InterPro" id="IPR011322">
    <property type="entry name" value="N-reg_PII-like_a/b"/>
</dbReference>
<dbReference type="InterPro" id="IPR015867">
    <property type="entry name" value="N-reg_PII/ATP_PRibTrfase_C"/>
</dbReference>
<dbReference type="NCBIfam" id="TIGR00070">
    <property type="entry name" value="hisG"/>
    <property type="match status" value="1"/>
</dbReference>
<dbReference type="NCBIfam" id="TIGR03455">
    <property type="entry name" value="HisG_C-term"/>
    <property type="match status" value="1"/>
</dbReference>
<dbReference type="PANTHER" id="PTHR21403:SF8">
    <property type="entry name" value="ATP PHOSPHORIBOSYLTRANSFERASE"/>
    <property type="match status" value="1"/>
</dbReference>
<dbReference type="PANTHER" id="PTHR21403">
    <property type="entry name" value="ATP PHOSPHORIBOSYLTRANSFERASE ATP-PRTASE"/>
    <property type="match status" value="1"/>
</dbReference>
<dbReference type="Pfam" id="PF01634">
    <property type="entry name" value="HisG"/>
    <property type="match status" value="1"/>
</dbReference>
<dbReference type="Pfam" id="PF08029">
    <property type="entry name" value="HisG_C"/>
    <property type="match status" value="1"/>
</dbReference>
<dbReference type="SUPFAM" id="SSF54913">
    <property type="entry name" value="GlnB-like"/>
    <property type="match status" value="1"/>
</dbReference>
<dbReference type="SUPFAM" id="SSF53850">
    <property type="entry name" value="Periplasmic binding protein-like II"/>
    <property type="match status" value="1"/>
</dbReference>
<dbReference type="PROSITE" id="PS01316">
    <property type="entry name" value="ATP_P_PHORIBOSYLTR"/>
    <property type="match status" value="1"/>
</dbReference>
<name>HIS1_SALDC</name>
<proteinExistence type="inferred from homology"/>
<sequence>MLDNTRLRIAIQKSGRLSDDSRELLARCGIKINLHTQRLIAMAENMPIDILRVRDDDIPGLVMDGVVDLGIIGENVLEEELLNRRAQGEDPRYLTLRRLDFGGCRLSLATPVDEAWDGPAALDGKRIATSYPHLLKRYLDQKGVSFKSCLLNGSVEVAPRAGLADAICDLVSTGATLEANGLREVEVIYRSKACLIQRDGEMAQSKQQLIDKLLTRIQGVIQARESKYIMMHAPSERLEEVIALLPGAERPTILPLAGEQQRVAMHMVSSETLFWETMEKLKALGASSILVLPIEKMME</sequence>
<keyword id="KW-0028">Amino-acid biosynthesis</keyword>
<keyword id="KW-0067">ATP-binding</keyword>
<keyword id="KW-0963">Cytoplasm</keyword>
<keyword id="KW-0328">Glycosyltransferase</keyword>
<keyword id="KW-0368">Histidine biosynthesis</keyword>
<keyword id="KW-0460">Magnesium</keyword>
<keyword id="KW-0479">Metal-binding</keyword>
<keyword id="KW-0547">Nucleotide-binding</keyword>
<keyword id="KW-0808">Transferase</keyword>
<gene>
    <name evidence="1" type="primary">hisG</name>
    <name type="ordered locus">SeD_A2409</name>
</gene>